<keyword id="KW-0045">Antibiotic biosynthesis</keyword>
<keyword id="KW-0274">FAD</keyword>
<keyword id="KW-0285">Flavoprotein</keyword>
<keyword id="KW-0560">Oxidoreductase</keyword>
<gene>
    <name type="primary">neoG</name>
    <name type="synonym">nemG</name>
    <name type="synonym">neo11</name>
    <name type="synonym">neoQ</name>
</gene>
<protein>
    <recommendedName>
        <fullName>Paromamine 6'-oxidase</fullName>
        <ecNumber evidence="3 4">1.1.3.43</ecNumber>
    </recommendedName>
    <alternativeName>
        <fullName>6'''-hydroxyneomycin C oxidase</fullName>
        <ecNumber evidence="3 4">1.1.3.44</ecNumber>
    </alternativeName>
    <alternativeName>
        <fullName>Neomycin biosynthesis protein 11</fullName>
        <shortName>Neo-11</shortName>
    </alternativeName>
    <alternativeName>
        <fullName>Neomycin biosynthesis protein Q</fullName>
    </alternativeName>
</protein>
<organism>
    <name type="scientific">Streptomyces fradiae</name>
    <name type="common">Streptomyces roseoflavus</name>
    <dbReference type="NCBI Taxonomy" id="1906"/>
    <lineage>
        <taxon>Bacteria</taxon>
        <taxon>Bacillati</taxon>
        <taxon>Actinomycetota</taxon>
        <taxon>Actinomycetes</taxon>
        <taxon>Kitasatosporales</taxon>
        <taxon>Streptomycetaceae</taxon>
        <taxon>Streptomyces</taxon>
    </lineage>
</organism>
<reference key="1">
    <citation type="journal article" date="2005" name="J. Antibiot.">
        <title>Biosynthesis of 2-deoxystreptamine by three crucial enzymes in Streptomyces fradiae NBRC 12773.</title>
        <authorList>
            <person name="Kudo F."/>
            <person name="Yamamoto Y."/>
            <person name="Yokoyama K."/>
            <person name="Eguchi T."/>
            <person name="Kakinuma K."/>
        </authorList>
    </citation>
    <scope>NUCLEOTIDE SEQUENCE [GENOMIC DNA]</scope>
    <source>
        <strain>ATCC 10745 / CBS 498.68 / DSM 40063 / JCM 4133 / NBRC 12773 / NCIMB 8233 / NRRL B-1195 / VKM Ac-150</strain>
    </source>
</reference>
<reference key="2">
    <citation type="journal article" date="2005" name="Org. Biomol. Chem.">
        <title>The neomycin biosynthetic gene cluster of Streptomyces fradiae NCIMB 8233: characterisation of an aminotransferase involved in the formation of 2-deoxystreptamine.</title>
        <authorList>
            <person name="Huang F."/>
            <person name="Haydock S.F."/>
            <person name="Mironenko T."/>
            <person name="Spiteller D."/>
            <person name="Li Y."/>
            <person name="Spencer J.B."/>
        </authorList>
    </citation>
    <scope>NUCLEOTIDE SEQUENCE [GENOMIC DNA]</scope>
    <source>
        <strain>ATCC 10745 / CBS 498.68 / DSM 40063 / JCM 4133 / NBRC 12773 / NCIMB 8233 / NRRL B-1195 / VKM Ac-150</strain>
    </source>
</reference>
<reference key="3">
    <citation type="submission" date="2004-02" db="EMBL/GenBank/DDBJ databases">
        <title>Analysis and comparison of biosynthetic gene clusters for the 2-deoxy-inosamine containing aminoglycoside antibiotics ribostamycin, neomycin, lividomycin, paromomycin and butirosin.</title>
        <authorList>
            <person name="Aboshanab K.M."/>
            <person name="Schmidt-Beissner H."/>
            <person name="Wehmeier U.F."/>
            <person name="Piepersberg W."/>
            <person name="Welzel K."/>
            <person name="Vente A."/>
        </authorList>
    </citation>
    <scope>NUCLEOTIDE SEQUENCE [GENOMIC DNA]</scope>
    <source>
        <strain>ATCC 10745 / CBS 498.68 / DSM 40063 / JCM 4133 / NBRC 12773 / NCIMB 8233 / NRRL B-1195 / VKM Ac-150</strain>
    </source>
</reference>
<reference key="4">
    <citation type="submission" date="2004-07" db="EMBL/GenBank/DDBJ databases">
        <title>Cloning and characterization of a neomycin biosynthetic gene cluster from Streptomyces fradiae, ATCC 10745.</title>
        <authorList>
            <person name="Subba B."/>
            <person name="Kharel M.K."/>
            <person name="Sthapit B."/>
            <person name="Liou K."/>
            <person name="Lee H.C."/>
            <person name="Woo J.S."/>
            <person name="Sohng J.K."/>
        </authorList>
    </citation>
    <scope>NUCLEOTIDE SEQUENCE [GENOMIC DNA]</scope>
    <source>
        <strain>ATCC 10745 / CBS 498.68 / DSM 40063 / JCM 4133 / NBRC 12773 / NCIMB 8233 / NRRL B-1195 / VKM Ac-150</strain>
    </source>
</reference>
<reference key="5">
    <citation type="journal article" date="2007" name="ChemBioChem">
        <title>Elaboration of neosamine rings in the biosynthesis of neomycin and butirosin.</title>
        <authorList>
            <person name="Huang F."/>
            <person name="Spiteller D."/>
            <person name="Koorbanally N.A."/>
            <person name="Li Y."/>
            <person name="Llewellyn N.M."/>
            <person name="Spencer J.B."/>
        </authorList>
    </citation>
    <scope>FUNCTION</scope>
    <scope>CATALYTIC ACTIVITY</scope>
    <scope>COFACTOR</scope>
    <scope>PATHWAY</scope>
    <source>
        <strain>ATCC 10745 / CBS 498.68 / DSM 40063 / JCM 4133 / NBRC 12773 / NCIMB 8233 / NRRL B-1195 / VKM Ac-150</strain>
    </source>
</reference>
<reference key="6">
    <citation type="journal article" date="2011" name="J. Appl. Microbiol.">
        <title>The oxidoreductases LivQ and NeoQ are responsible for the different 6'-modifications in the aminoglycosides lividomycin and neomycin.</title>
        <authorList>
            <person name="Clausnitzer D."/>
            <person name="Piepersberg W."/>
            <person name="Wehmeier U.F."/>
        </authorList>
    </citation>
    <scope>FUNCTION</scope>
    <scope>CATALYTIC ACTIVITY</scope>
</reference>
<accession>Q53U15</accession>
<comment type="function">
    <text evidence="3 4">Glucosaminyl-6'-oxidase involved in the biosynthetic pathway of neomycin by mediating FAD-dependent dehydrogenation of paromamine to 6'-dehydro-6'-oxoparomamine. Works in combination with neamine transaminase to replace the 6-hydroxy group of paromamine with an amino group. Also able to collaborate with neomycin C transaminase to replace the 6'''-hydroxy group of 6'''-hydroxyneomycin C with an amino group.</text>
</comment>
<comment type="catalytic activity">
    <reaction evidence="3 4">
        <text>6'''-deamino-6'''-hydroxyneomycin C + O2 = 6'''-deamino-6'''-oxoneomycin C + H2O2</text>
        <dbReference type="Rhea" id="RHEA:34047"/>
        <dbReference type="ChEBI" id="CHEBI:15379"/>
        <dbReference type="ChEBI" id="CHEBI:16240"/>
        <dbReference type="ChEBI" id="CHEBI:65031"/>
        <dbReference type="ChEBI" id="CHEBI:65068"/>
        <dbReference type="EC" id="1.1.3.44"/>
    </reaction>
</comment>
<comment type="catalytic activity">
    <reaction evidence="3 4">
        <text>paromamine + O2 = 6'-oxoparomamine + H2O2</text>
        <dbReference type="Rhea" id="RHEA:34035"/>
        <dbReference type="ChEBI" id="CHEBI:15379"/>
        <dbReference type="ChEBI" id="CHEBI:16240"/>
        <dbReference type="ChEBI" id="CHEBI:65015"/>
        <dbReference type="ChEBI" id="CHEBI:65016"/>
        <dbReference type="EC" id="1.1.3.43"/>
    </reaction>
</comment>
<comment type="cofactor">
    <cofactor evidence="3">
        <name>FAD</name>
        <dbReference type="ChEBI" id="CHEBI:57692"/>
    </cofactor>
</comment>
<comment type="pathway">
    <text evidence="3">Antibiotic biosynthesis; neomycin biosynthesis.</text>
</comment>
<comment type="similarity">
    <text evidence="5">Belongs to the GMC oxidoreductase family.</text>
</comment>
<sequence length="541" mass="58004">MKRLRGTLPSDARHAWHPEPLGPAHRDGWDTRDDDRVWDVVVIGSGASGSVAADRLVRQGLDVLMIEEGFRLSPDLGNPELDDMCRTALARDGQGGWTDEGWPWTTSNLGGGTVFYGGASWRYRPFDFDPSELVDAGGLDVRWPYGLAELAPYYDVLERRLGVCGGEEGEGSRGPAHPPTAAAEVLYEAGTALGYEPFPTPLAINRHAHGGRSACERNSLCVSHQCSTGAKGDAVAVFLAPLAAHPNFTLRTGVRALRLNQDRPDAVGSVTCLDRLGRTTHRVRARSFVVACNAIQSAALLLRSRGGRAPDGVGNHSGLVGRGLTMKLSEYVSGVVDAPSAATLADWRAHAGPFSTIAFLDHYLDADCPTGVGGMIYESKNDMPSRIRDDVLELRIETILADHPNLDNRVRLSSHADEDGVPAVVIDYTPDPRDLRRLAYMTDVCERLLRKAGATGIAHEESGFAQGSCHLHGTCRAGDDPATSVVDGWGRVHSAPNVYVVDGGFMPYPGGLNPTLTIQAHALRSAKAVAGDLVSRHTAHV</sequence>
<name>NEOG_STRFR</name>
<dbReference type="EC" id="1.1.3.43" evidence="3 4"/>
<dbReference type="EC" id="1.1.3.44" evidence="3 4"/>
<dbReference type="EMBL" id="AB211959">
    <property type="protein sequence ID" value="BAD95824.1"/>
    <property type="molecule type" value="Genomic_DNA"/>
</dbReference>
<dbReference type="EMBL" id="AJ843080">
    <property type="protein sequence ID" value="CAH58694.1"/>
    <property type="molecule type" value="Genomic_DNA"/>
</dbReference>
<dbReference type="EMBL" id="AJ629247">
    <property type="protein sequence ID" value="CAF33316.1"/>
    <property type="molecule type" value="Genomic_DNA"/>
</dbReference>
<dbReference type="EMBL" id="AJ786317">
    <property type="protein sequence ID" value="CAH05097.1"/>
    <property type="molecule type" value="Genomic_DNA"/>
</dbReference>
<dbReference type="SMR" id="Q53U15"/>
<dbReference type="KEGG" id="ag:BAD95824"/>
<dbReference type="BioCyc" id="MetaCyc:MONOMER-17237"/>
<dbReference type="BRENDA" id="1.1.3.43">
    <property type="organism ID" value="5932"/>
</dbReference>
<dbReference type="BRENDA" id="1.1.3.44">
    <property type="organism ID" value="5932"/>
</dbReference>
<dbReference type="UniPathway" id="UPA00969"/>
<dbReference type="GO" id="GO:0050660">
    <property type="term" value="F:flavin adenine dinucleotide binding"/>
    <property type="evidence" value="ECO:0007669"/>
    <property type="project" value="InterPro"/>
</dbReference>
<dbReference type="GO" id="GO:0016899">
    <property type="term" value="F:oxidoreductase activity, acting on the CH-OH group of donors, oxygen as acceptor"/>
    <property type="evidence" value="ECO:0000314"/>
    <property type="project" value="UniProtKB"/>
</dbReference>
<dbReference type="GO" id="GO:1901158">
    <property type="term" value="P:neomycin biosynthetic process"/>
    <property type="evidence" value="ECO:0000314"/>
    <property type="project" value="UniProtKB"/>
</dbReference>
<dbReference type="FunFam" id="3.50.50.60:FF:000566">
    <property type="entry name" value="Paromamine 6'-oxidase"/>
    <property type="match status" value="1"/>
</dbReference>
<dbReference type="FunFam" id="3.50.50.60:FF:000567">
    <property type="entry name" value="Paromamine 6'-oxidase"/>
    <property type="match status" value="1"/>
</dbReference>
<dbReference type="FunFam" id="3.50.50.60:FF:000568">
    <property type="entry name" value="Paromamine 6'-oxidase"/>
    <property type="match status" value="1"/>
</dbReference>
<dbReference type="Gene3D" id="3.50.50.60">
    <property type="entry name" value="FAD/NAD(P)-binding domain"/>
    <property type="match status" value="3"/>
</dbReference>
<dbReference type="InterPro" id="IPR036188">
    <property type="entry name" value="FAD/NAD-bd_sf"/>
</dbReference>
<dbReference type="InterPro" id="IPR000172">
    <property type="entry name" value="GMC_OxRdtase_N"/>
</dbReference>
<dbReference type="InterPro" id="IPR007867">
    <property type="entry name" value="GMC_OxRtase_C"/>
</dbReference>
<dbReference type="InterPro" id="IPR051473">
    <property type="entry name" value="P2Ox-like"/>
</dbReference>
<dbReference type="PANTHER" id="PTHR42784">
    <property type="entry name" value="PYRANOSE 2-OXIDASE"/>
    <property type="match status" value="1"/>
</dbReference>
<dbReference type="PANTHER" id="PTHR42784:SF1">
    <property type="entry name" value="PYRANOSE 2-OXIDASE"/>
    <property type="match status" value="1"/>
</dbReference>
<dbReference type="Pfam" id="PF05199">
    <property type="entry name" value="GMC_oxred_C"/>
    <property type="match status" value="1"/>
</dbReference>
<dbReference type="Pfam" id="PF00732">
    <property type="entry name" value="GMC_oxred_N"/>
    <property type="match status" value="1"/>
</dbReference>
<dbReference type="Pfam" id="PF13450">
    <property type="entry name" value="NAD_binding_8"/>
    <property type="match status" value="1"/>
</dbReference>
<dbReference type="SUPFAM" id="SSF54373">
    <property type="entry name" value="FAD-linked reductases, C-terminal domain"/>
    <property type="match status" value="1"/>
</dbReference>
<dbReference type="SUPFAM" id="SSF51905">
    <property type="entry name" value="FAD/NAD(P)-binding domain"/>
    <property type="match status" value="1"/>
</dbReference>
<evidence type="ECO:0000250" key="1">
    <source>
        <dbReference type="UniProtKB" id="E4QP00"/>
    </source>
</evidence>
<evidence type="ECO:0000256" key="2">
    <source>
        <dbReference type="SAM" id="MobiDB-lite"/>
    </source>
</evidence>
<evidence type="ECO:0000269" key="3">
    <source>
    </source>
</evidence>
<evidence type="ECO:0000269" key="4">
    <source>
    </source>
</evidence>
<evidence type="ECO:0000305" key="5"/>
<proteinExistence type="evidence at protein level"/>
<feature type="chain" id="PRO_0000421737" description="Paromamine 6'-oxidase">
    <location>
        <begin position="1"/>
        <end position="541"/>
    </location>
</feature>
<feature type="region of interest" description="Disordered" evidence="2">
    <location>
        <begin position="1"/>
        <end position="29"/>
    </location>
</feature>
<feature type="active site" description="Proton acceptor" evidence="1">
    <location>
        <position position="470"/>
    </location>
</feature>